<feature type="chain" id="PRO_0000174515" description="S-adenosylmethionine synthase">
    <location>
        <begin position="1"/>
        <end position="408"/>
    </location>
</feature>
<feature type="region of interest" description="Flexible loop" evidence="1">
    <location>
        <begin position="104"/>
        <end position="114"/>
    </location>
</feature>
<feature type="binding site" description="in other chain" evidence="1">
    <location>
        <position position="19"/>
    </location>
    <ligand>
        <name>ATP</name>
        <dbReference type="ChEBI" id="CHEBI:30616"/>
        <note>ligand shared between two neighboring subunits</note>
    </ligand>
</feature>
<feature type="binding site" evidence="1">
    <location>
        <position position="21"/>
    </location>
    <ligand>
        <name>Mg(2+)</name>
        <dbReference type="ChEBI" id="CHEBI:18420"/>
    </ligand>
</feature>
<feature type="binding site" evidence="1">
    <location>
        <position position="47"/>
    </location>
    <ligand>
        <name>K(+)</name>
        <dbReference type="ChEBI" id="CHEBI:29103"/>
    </ligand>
</feature>
<feature type="binding site" description="in other chain" evidence="1">
    <location>
        <position position="60"/>
    </location>
    <ligand>
        <name>L-methionine</name>
        <dbReference type="ChEBI" id="CHEBI:57844"/>
        <note>ligand shared between two neighboring subunits</note>
    </ligand>
</feature>
<feature type="binding site" description="in other chain" evidence="1">
    <location>
        <position position="104"/>
    </location>
    <ligand>
        <name>L-methionine</name>
        <dbReference type="ChEBI" id="CHEBI:57844"/>
        <note>ligand shared between two neighboring subunits</note>
    </ligand>
</feature>
<feature type="binding site" description="in other chain" evidence="1">
    <location>
        <begin position="185"/>
        <end position="187"/>
    </location>
    <ligand>
        <name>ATP</name>
        <dbReference type="ChEBI" id="CHEBI:30616"/>
        <note>ligand shared between two neighboring subunits</note>
    </ligand>
</feature>
<feature type="binding site" description="in other chain" evidence="1">
    <location>
        <begin position="255"/>
        <end position="256"/>
    </location>
    <ligand>
        <name>ATP</name>
        <dbReference type="ChEBI" id="CHEBI:30616"/>
        <note>ligand shared between two neighboring subunits</note>
    </ligand>
</feature>
<feature type="binding site" evidence="1">
    <location>
        <position position="264"/>
    </location>
    <ligand>
        <name>ATP</name>
        <dbReference type="ChEBI" id="CHEBI:30616"/>
        <note>ligand shared between two neighboring subunits</note>
    </ligand>
</feature>
<feature type="binding site" evidence="1">
    <location>
        <position position="264"/>
    </location>
    <ligand>
        <name>L-methionine</name>
        <dbReference type="ChEBI" id="CHEBI:57844"/>
        <note>ligand shared between two neighboring subunits</note>
    </ligand>
</feature>
<feature type="binding site" description="in other chain" evidence="1">
    <location>
        <begin position="270"/>
        <end position="271"/>
    </location>
    <ligand>
        <name>ATP</name>
        <dbReference type="ChEBI" id="CHEBI:30616"/>
        <note>ligand shared between two neighboring subunits</note>
    </ligand>
</feature>
<feature type="binding site" evidence="1">
    <location>
        <position position="287"/>
    </location>
    <ligand>
        <name>ATP</name>
        <dbReference type="ChEBI" id="CHEBI:30616"/>
        <note>ligand shared between two neighboring subunits</note>
    </ligand>
</feature>
<feature type="binding site" evidence="1">
    <location>
        <position position="291"/>
    </location>
    <ligand>
        <name>ATP</name>
        <dbReference type="ChEBI" id="CHEBI:30616"/>
        <note>ligand shared between two neighboring subunits</note>
    </ligand>
</feature>
<feature type="binding site" description="in other chain" evidence="1">
    <location>
        <position position="295"/>
    </location>
    <ligand>
        <name>L-methionine</name>
        <dbReference type="ChEBI" id="CHEBI:57844"/>
        <note>ligand shared between two neighboring subunits</note>
    </ligand>
</feature>
<evidence type="ECO:0000255" key="1">
    <source>
        <dbReference type="HAMAP-Rule" id="MF_00086"/>
    </source>
</evidence>
<reference key="1">
    <citation type="journal article" date="1999" name="Science">
        <title>Genome sequence of the radioresistant bacterium Deinococcus radiodurans R1.</title>
        <authorList>
            <person name="White O."/>
            <person name="Eisen J.A."/>
            <person name="Heidelberg J.F."/>
            <person name="Hickey E.K."/>
            <person name="Peterson J.D."/>
            <person name="Dodson R.J."/>
            <person name="Haft D.H."/>
            <person name="Gwinn M.L."/>
            <person name="Nelson W.C."/>
            <person name="Richardson D.L."/>
            <person name="Moffat K.S."/>
            <person name="Qin H."/>
            <person name="Jiang L."/>
            <person name="Pamphile W."/>
            <person name="Crosby M."/>
            <person name="Shen M."/>
            <person name="Vamathevan J.J."/>
            <person name="Lam P."/>
            <person name="McDonald L.A."/>
            <person name="Utterback T.R."/>
            <person name="Zalewski C."/>
            <person name="Makarova K.S."/>
            <person name="Aravind L."/>
            <person name="Daly M.J."/>
            <person name="Minton K.W."/>
            <person name="Fleischmann R.D."/>
            <person name="Ketchum K.A."/>
            <person name="Nelson K.E."/>
            <person name="Salzberg S.L."/>
            <person name="Smith H.O."/>
            <person name="Venter J.C."/>
            <person name="Fraser C.M."/>
        </authorList>
    </citation>
    <scope>NUCLEOTIDE SEQUENCE [LARGE SCALE GENOMIC DNA]</scope>
    <source>
        <strain>ATCC 13939 / DSM 20539 / JCM 16871 / CCUG 27074 / LMG 4051 / NBRC 15346 / NCIMB 9279 / VKM B-1422 / R1</strain>
    </source>
</reference>
<proteinExistence type="inferred from homology"/>
<accession>Q9RWM6</accession>
<sequence>MSKFAVRKFYTSESVSEGHPDKLSDFISDSILDEFLRQEPTSRVAVETLVTTGMAVVAGEVRAHTAHVDIQKTVREAVQRVGYTRANYGFDAEYSAVLVAIHEQSPEIASGVDHSEEWREMSEAERQKPENAYSMVGAGDQGLMFGYATDETPELMPLPISLAHGLTRRLAELRKDGTLPYLRPDAKAQVTVVRNGEPHSATETAVDTIVISTQHSDDVTQEQIRADMLEHVIPAVIPAELLNEQTRYFINPSGRFVIGGPHGDTGLTGRKIIVDTYGGAVPHGGGAFSGKDPTKVDRSAAYYARYVAKNIVAAGLARRALVEIAYAIGRAHPVSLRVDTYGTGTVSDEKLDELIAAHFDARPQAIIAQLDLQRPIYAQTAAYGHFGRPEFPWEQTDRAQALKEAAQG</sequence>
<gene>
    <name evidence="1" type="primary">metK</name>
    <name type="ordered locus">DR_0640</name>
</gene>
<dbReference type="EC" id="2.5.1.6" evidence="1"/>
<dbReference type="EMBL" id="AE000513">
    <property type="protein sequence ID" value="AAF10215.1"/>
    <property type="molecule type" value="Genomic_DNA"/>
</dbReference>
<dbReference type="PIR" id="F75495">
    <property type="entry name" value="F75495"/>
</dbReference>
<dbReference type="RefSeq" id="NP_294363.1">
    <property type="nucleotide sequence ID" value="NC_001263.1"/>
</dbReference>
<dbReference type="RefSeq" id="WP_010887285.1">
    <property type="nucleotide sequence ID" value="NC_001263.1"/>
</dbReference>
<dbReference type="SMR" id="Q9RWM6"/>
<dbReference type="FunCoup" id="Q9RWM6">
    <property type="interactions" value="463"/>
</dbReference>
<dbReference type="STRING" id="243230.DR_0640"/>
<dbReference type="PaxDb" id="243230-DR_0640"/>
<dbReference type="EnsemblBacteria" id="AAF10215">
    <property type="protein sequence ID" value="AAF10215"/>
    <property type="gene ID" value="DR_0640"/>
</dbReference>
<dbReference type="GeneID" id="69516887"/>
<dbReference type="KEGG" id="dra:DR_0640"/>
<dbReference type="PATRIC" id="fig|243230.17.peg.819"/>
<dbReference type="eggNOG" id="COG0192">
    <property type="taxonomic scope" value="Bacteria"/>
</dbReference>
<dbReference type="HOGENOM" id="CLU_041802_1_1_0"/>
<dbReference type="InParanoid" id="Q9RWM6"/>
<dbReference type="OrthoDB" id="9801686at2"/>
<dbReference type="UniPathway" id="UPA00315">
    <property type="reaction ID" value="UER00080"/>
</dbReference>
<dbReference type="Proteomes" id="UP000002524">
    <property type="component" value="Chromosome 1"/>
</dbReference>
<dbReference type="GO" id="GO:0005829">
    <property type="term" value="C:cytosol"/>
    <property type="evidence" value="ECO:0000318"/>
    <property type="project" value="GO_Central"/>
</dbReference>
<dbReference type="GO" id="GO:0005524">
    <property type="term" value="F:ATP binding"/>
    <property type="evidence" value="ECO:0007669"/>
    <property type="project" value="UniProtKB-UniRule"/>
</dbReference>
<dbReference type="GO" id="GO:0000287">
    <property type="term" value="F:magnesium ion binding"/>
    <property type="evidence" value="ECO:0007669"/>
    <property type="project" value="UniProtKB-UniRule"/>
</dbReference>
<dbReference type="GO" id="GO:0004478">
    <property type="term" value="F:methionine adenosyltransferase activity"/>
    <property type="evidence" value="ECO:0000318"/>
    <property type="project" value="GO_Central"/>
</dbReference>
<dbReference type="GO" id="GO:0006730">
    <property type="term" value="P:one-carbon metabolic process"/>
    <property type="evidence" value="ECO:0007669"/>
    <property type="project" value="UniProtKB-KW"/>
</dbReference>
<dbReference type="GO" id="GO:0006556">
    <property type="term" value="P:S-adenosylmethionine biosynthetic process"/>
    <property type="evidence" value="ECO:0000318"/>
    <property type="project" value="GO_Central"/>
</dbReference>
<dbReference type="CDD" id="cd18079">
    <property type="entry name" value="S-AdoMet_synt"/>
    <property type="match status" value="1"/>
</dbReference>
<dbReference type="FunFam" id="3.30.300.10:FF:000003">
    <property type="entry name" value="S-adenosylmethionine synthase"/>
    <property type="match status" value="1"/>
</dbReference>
<dbReference type="FunFam" id="3.30.300.10:FF:000011">
    <property type="entry name" value="S-adenosylmethionine synthase"/>
    <property type="match status" value="1"/>
</dbReference>
<dbReference type="Gene3D" id="3.30.300.10">
    <property type="match status" value="3"/>
</dbReference>
<dbReference type="HAMAP" id="MF_00086">
    <property type="entry name" value="S_AdoMet_synth1"/>
    <property type="match status" value="1"/>
</dbReference>
<dbReference type="InterPro" id="IPR022631">
    <property type="entry name" value="ADOMET_SYNTHASE_CS"/>
</dbReference>
<dbReference type="InterPro" id="IPR022630">
    <property type="entry name" value="S-AdoMet_synt_C"/>
</dbReference>
<dbReference type="InterPro" id="IPR022629">
    <property type="entry name" value="S-AdoMet_synt_central"/>
</dbReference>
<dbReference type="InterPro" id="IPR022628">
    <property type="entry name" value="S-AdoMet_synt_N"/>
</dbReference>
<dbReference type="InterPro" id="IPR002133">
    <property type="entry name" value="S-AdoMet_synthetase"/>
</dbReference>
<dbReference type="InterPro" id="IPR022636">
    <property type="entry name" value="S-AdoMet_synthetase_sfam"/>
</dbReference>
<dbReference type="NCBIfam" id="TIGR01034">
    <property type="entry name" value="metK"/>
    <property type="match status" value="1"/>
</dbReference>
<dbReference type="PANTHER" id="PTHR11964">
    <property type="entry name" value="S-ADENOSYLMETHIONINE SYNTHETASE"/>
    <property type="match status" value="1"/>
</dbReference>
<dbReference type="Pfam" id="PF02773">
    <property type="entry name" value="S-AdoMet_synt_C"/>
    <property type="match status" value="1"/>
</dbReference>
<dbReference type="Pfam" id="PF02772">
    <property type="entry name" value="S-AdoMet_synt_M"/>
    <property type="match status" value="1"/>
</dbReference>
<dbReference type="Pfam" id="PF00438">
    <property type="entry name" value="S-AdoMet_synt_N"/>
    <property type="match status" value="1"/>
</dbReference>
<dbReference type="PIRSF" id="PIRSF000497">
    <property type="entry name" value="MAT"/>
    <property type="match status" value="1"/>
</dbReference>
<dbReference type="SUPFAM" id="SSF55973">
    <property type="entry name" value="S-adenosylmethionine synthetase"/>
    <property type="match status" value="3"/>
</dbReference>
<dbReference type="PROSITE" id="PS00376">
    <property type="entry name" value="ADOMET_SYNTHASE_1"/>
    <property type="match status" value="1"/>
</dbReference>
<dbReference type="PROSITE" id="PS00377">
    <property type="entry name" value="ADOMET_SYNTHASE_2"/>
    <property type="match status" value="1"/>
</dbReference>
<name>METK_DEIRA</name>
<protein>
    <recommendedName>
        <fullName evidence="1">S-adenosylmethionine synthase</fullName>
        <shortName evidence="1">AdoMet synthase</shortName>
        <ecNumber evidence="1">2.5.1.6</ecNumber>
    </recommendedName>
    <alternativeName>
        <fullName evidence="1">MAT</fullName>
    </alternativeName>
    <alternativeName>
        <fullName evidence="1">Methionine adenosyltransferase</fullName>
    </alternativeName>
</protein>
<keyword id="KW-0067">ATP-binding</keyword>
<keyword id="KW-0963">Cytoplasm</keyword>
<keyword id="KW-0460">Magnesium</keyword>
<keyword id="KW-0479">Metal-binding</keyword>
<keyword id="KW-0547">Nucleotide-binding</keyword>
<keyword id="KW-0554">One-carbon metabolism</keyword>
<keyword id="KW-0630">Potassium</keyword>
<keyword id="KW-1185">Reference proteome</keyword>
<keyword id="KW-0808">Transferase</keyword>
<comment type="function">
    <text evidence="1">Catalyzes the formation of S-adenosylmethionine (AdoMet) from methionine and ATP. The overall synthetic reaction is composed of two sequential steps, AdoMet formation and the subsequent tripolyphosphate hydrolysis which occurs prior to release of AdoMet from the enzyme.</text>
</comment>
<comment type="catalytic activity">
    <reaction evidence="1">
        <text>L-methionine + ATP + H2O = S-adenosyl-L-methionine + phosphate + diphosphate</text>
        <dbReference type="Rhea" id="RHEA:21080"/>
        <dbReference type="ChEBI" id="CHEBI:15377"/>
        <dbReference type="ChEBI" id="CHEBI:30616"/>
        <dbReference type="ChEBI" id="CHEBI:33019"/>
        <dbReference type="ChEBI" id="CHEBI:43474"/>
        <dbReference type="ChEBI" id="CHEBI:57844"/>
        <dbReference type="ChEBI" id="CHEBI:59789"/>
        <dbReference type="EC" id="2.5.1.6"/>
    </reaction>
</comment>
<comment type="cofactor">
    <cofactor evidence="1">
        <name>Mg(2+)</name>
        <dbReference type="ChEBI" id="CHEBI:18420"/>
    </cofactor>
    <text evidence="1">Binds 2 divalent ions per subunit.</text>
</comment>
<comment type="cofactor">
    <cofactor evidence="1">
        <name>K(+)</name>
        <dbReference type="ChEBI" id="CHEBI:29103"/>
    </cofactor>
    <text evidence="1">Binds 1 potassium ion per subunit.</text>
</comment>
<comment type="pathway">
    <text evidence="1">Amino-acid biosynthesis; S-adenosyl-L-methionine biosynthesis; S-adenosyl-L-methionine from L-methionine: step 1/1.</text>
</comment>
<comment type="subunit">
    <text evidence="1">Homotetramer; dimer of dimers.</text>
</comment>
<comment type="subcellular location">
    <subcellularLocation>
        <location evidence="1">Cytoplasm</location>
    </subcellularLocation>
</comment>
<comment type="similarity">
    <text evidence="1">Belongs to the AdoMet synthase family.</text>
</comment>
<organism>
    <name type="scientific">Deinococcus radiodurans (strain ATCC 13939 / DSM 20539 / JCM 16871 / CCUG 27074 / LMG 4051 / NBRC 15346 / NCIMB 9279 / VKM B-1422 / R1)</name>
    <dbReference type="NCBI Taxonomy" id="243230"/>
    <lineage>
        <taxon>Bacteria</taxon>
        <taxon>Thermotogati</taxon>
        <taxon>Deinococcota</taxon>
        <taxon>Deinococci</taxon>
        <taxon>Deinococcales</taxon>
        <taxon>Deinococcaceae</taxon>
        <taxon>Deinococcus</taxon>
    </lineage>
</organism>